<comment type="function">
    <text evidence="1">Converts the preformed base xanthine, a product of nucleic acid breakdown, to xanthosine 5'-monophosphate (XMP), so it can be reused for RNA or DNA synthesis.</text>
</comment>
<comment type="catalytic activity">
    <reaction evidence="1">
        <text>XMP + diphosphate = xanthine + 5-phospho-alpha-D-ribose 1-diphosphate</text>
        <dbReference type="Rhea" id="RHEA:10800"/>
        <dbReference type="ChEBI" id="CHEBI:17712"/>
        <dbReference type="ChEBI" id="CHEBI:33019"/>
        <dbReference type="ChEBI" id="CHEBI:57464"/>
        <dbReference type="ChEBI" id="CHEBI:58017"/>
        <dbReference type="EC" id="2.4.2.22"/>
    </reaction>
</comment>
<comment type="pathway">
    <text evidence="1">Purine metabolism; XMP biosynthesis via salvage pathway; XMP from xanthine: step 1/1.</text>
</comment>
<comment type="subunit">
    <text evidence="1">Homodimer.</text>
</comment>
<comment type="subcellular location">
    <subcellularLocation>
        <location evidence="1">Cytoplasm</location>
    </subcellularLocation>
</comment>
<comment type="similarity">
    <text evidence="1">Belongs to the purine/pyrimidine phosphoribosyltransferase family. Xpt subfamily.</text>
</comment>
<dbReference type="EC" id="2.4.2.22" evidence="1"/>
<dbReference type="EMBL" id="CP000227">
    <property type="protein sequence ID" value="ACM12063.1"/>
    <property type="molecule type" value="Genomic_DNA"/>
</dbReference>
<dbReference type="SMR" id="B9IVT8"/>
<dbReference type="KEGG" id="bcq:BCQ_1635"/>
<dbReference type="HOGENOM" id="CLU_099015_0_0_9"/>
<dbReference type="UniPathway" id="UPA00602">
    <property type="reaction ID" value="UER00658"/>
</dbReference>
<dbReference type="Proteomes" id="UP000000441">
    <property type="component" value="Chromosome"/>
</dbReference>
<dbReference type="GO" id="GO:0005737">
    <property type="term" value="C:cytoplasm"/>
    <property type="evidence" value="ECO:0007669"/>
    <property type="project" value="UniProtKB-SubCell"/>
</dbReference>
<dbReference type="GO" id="GO:0000310">
    <property type="term" value="F:xanthine phosphoribosyltransferase activity"/>
    <property type="evidence" value="ECO:0007669"/>
    <property type="project" value="UniProtKB-UniRule"/>
</dbReference>
<dbReference type="GO" id="GO:0006166">
    <property type="term" value="P:purine ribonucleoside salvage"/>
    <property type="evidence" value="ECO:0007669"/>
    <property type="project" value="UniProtKB-KW"/>
</dbReference>
<dbReference type="GO" id="GO:0046110">
    <property type="term" value="P:xanthine metabolic process"/>
    <property type="evidence" value="ECO:0007669"/>
    <property type="project" value="InterPro"/>
</dbReference>
<dbReference type="GO" id="GO:0032265">
    <property type="term" value="P:XMP salvage"/>
    <property type="evidence" value="ECO:0007669"/>
    <property type="project" value="UniProtKB-UniRule"/>
</dbReference>
<dbReference type="CDD" id="cd06223">
    <property type="entry name" value="PRTases_typeI"/>
    <property type="match status" value="1"/>
</dbReference>
<dbReference type="Gene3D" id="3.40.50.2020">
    <property type="match status" value="1"/>
</dbReference>
<dbReference type="HAMAP" id="MF_01184">
    <property type="entry name" value="XPRTase"/>
    <property type="match status" value="1"/>
</dbReference>
<dbReference type="InterPro" id="IPR000836">
    <property type="entry name" value="PRibTrfase_dom"/>
</dbReference>
<dbReference type="InterPro" id="IPR029057">
    <property type="entry name" value="PRTase-like"/>
</dbReference>
<dbReference type="InterPro" id="IPR050118">
    <property type="entry name" value="Pur/Pyrimidine_PRTase"/>
</dbReference>
<dbReference type="InterPro" id="IPR010079">
    <property type="entry name" value="Xanthine_PRibTrfase"/>
</dbReference>
<dbReference type="NCBIfam" id="NF006671">
    <property type="entry name" value="PRK09219.1"/>
    <property type="match status" value="1"/>
</dbReference>
<dbReference type="NCBIfam" id="TIGR01744">
    <property type="entry name" value="XPRTase"/>
    <property type="match status" value="1"/>
</dbReference>
<dbReference type="PANTHER" id="PTHR43864">
    <property type="entry name" value="HYPOXANTHINE/GUANINE PHOSPHORIBOSYLTRANSFERASE"/>
    <property type="match status" value="1"/>
</dbReference>
<dbReference type="PANTHER" id="PTHR43864:SF1">
    <property type="entry name" value="XANTHINE PHOSPHORIBOSYLTRANSFERASE"/>
    <property type="match status" value="1"/>
</dbReference>
<dbReference type="Pfam" id="PF00156">
    <property type="entry name" value="Pribosyltran"/>
    <property type="match status" value="1"/>
</dbReference>
<dbReference type="SUPFAM" id="SSF53271">
    <property type="entry name" value="PRTase-like"/>
    <property type="match status" value="1"/>
</dbReference>
<gene>
    <name evidence="1" type="primary">xpt</name>
    <name type="ordered locus">BCQ_1635</name>
</gene>
<sequence>MKVLQEKILNEGKVLSGDVLKVDAFLNHQIDPVLMQEIGKEFAKRFKEENITKIVTIESSGIAPAVMAALELGVKVIFARKRKSLTLQDNMYVANVYSFTKQETNEISLSRNHIDESDRVLIIDDFLANGQAALGLMSLVEQAGASIAGIGIVIEKAFQDGGKKLREQGIRVESLAEIASLDNNAVTFVQQETAEVK</sequence>
<evidence type="ECO:0000255" key="1">
    <source>
        <dbReference type="HAMAP-Rule" id="MF_01184"/>
    </source>
</evidence>
<name>XPT_BACCQ</name>
<organism>
    <name type="scientific">Bacillus cereus (strain Q1)</name>
    <dbReference type="NCBI Taxonomy" id="361100"/>
    <lineage>
        <taxon>Bacteria</taxon>
        <taxon>Bacillati</taxon>
        <taxon>Bacillota</taxon>
        <taxon>Bacilli</taxon>
        <taxon>Bacillales</taxon>
        <taxon>Bacillaceae</taxon>
        <taxon>Bacillus</taxon>
        <taxon>Bacillus cereus group</taxon>
    </lineage>
</organism>
<protein>
    <recommendedName>
        <fullName evidence="1">Xanthine phosphoribosyltransferase</fullName>
        <shortName evidence="1">XPRTase</shortName>
        <ecNumber evidence="1">2.4.2.22</ecNumber>
    </recommendedName>
</protein>
<accession>B9IVT8</accession>
<feature type="chain" id="PRO_1000164446" description="Xanthine phosphoribosyltransferase">
    <location>
        <begin position="1"/>
        <end position="197"/>
    </location>
</feature>
<feature type="binding site" evidence="1">
    <location>
        <position position="20"/>
    </location>
    <ligand>
        <name>xanthine</name>
        <dbReference type="ChEBI" id="CHEBI:17712"/>
    </ligand>
</feature>
<feature type="binding site" evidence="1">
    <location>
        <position position="27"/>
    </location>
    <ligand>
        <name>xanthine</name>
        <dbReference type="ChEBI" id="CHEBI:17712"/>
    </ligand>
</feature>
<feature type="binding site" evidence="1">
    <location>
        <begin position="128"/>
        <end position="132"/>
    </location>
    <ligand>
        <name>5-phospho-alpha-D-ribose 1-diphosphate</name>
        <dbReference type="ChEBI" id="CHEBI:58017"/>
    </ligand>
</feature>
<feature type="binding site" evidence="1">
    <location>
        <position position="156"/>
    </location>
    <ligand>
        <name>xanthine</name>
        <dbReference type="ChEBI" id="CHEBI:17712"/>
    </ligand>
</feature>
<proteinExistence type="inferred from homology"/>
<reference key="1">
    <citation type="journal article" date="2009" name="J. Bacteriol.">
        <title>Complete genome sequence of the extremophilic Bacillus cereus strain Q1 with industrial applications.</title>
        <authorList>
            <person name="Xiong Z."/>
            <person name="Jiang Y."/>
            <person name="Qi D."/>
            <person name="Lu H."/>
            <person name="Yang F."/>
            <person name="Yang J."/>
            <person name="Chen L."/>
            <person name="Sun L."/>
            <person name="Xu X."/>
            <person name="Xue Y."/>
            <person name="Zhu Y."/>
            <person name="Jin Q."/>
        </authorList>
    </citation>
    <scope>NUCLEOTIDE SEQUENCE [LARGE SCALE GENOMIC DNA]</scope>
    <source>
        <strain>Q1</strain>
    </source>
</reference>
<keyword id="KW-0963">Cytoplasm</keyword>
<keyword id="KW-0328">Glycosyltransferase</keyword>
<keyword id="KW-0660">Purine salvage</keyword>
<keyword id="KW-0808">Transferase</keyword>